<evidence type="ECO:0000250" key="1"/>
<evidence type="ECO:0000255" key="2"/>
<evidence type="ECO:0000305" key="3"/>
<accession>P10865</accession>
<reference key="1">
    <citation type="journal article" date="1987" name="Virology">
        <title>Structural comparison of the cleavage-activation site of the fusion glycoprotein between virulent and avirulent strains of Newcastle disease virus.</title>
        <authorList>
            <person name="Toyoda T."/>
            <person name="Sakaguchi T."/>
            <person name="Imai K."/>
            <person name="Inocencio N.M."/>
            <person name="Gotoh B."/>
            <person name="Hamaguchi M."/>
            <person name="Nagai Y."/>
        </authorList>
    </citation>
    <scope>NUCLEOTIDE SEQUENCE [GENOMIC RNA]</scope>
</reference>
<reference key="2">
    <citation type="journal article" date="1989" name="Virology">
        <title>Newcastle disease virus evolution. II. Lack of gene recombination in generating virulent and avirulent strains.</title>
        <authorList>
            <person name="Toyoda T."/>
            <person name="Sakaguchi T."/>
            <person name="Hirota H."/>
            <person name="Gotoh B."/>
            <person name="Kuma K."/>
            <person name="Miyata T."/>
            <person name="Nagai Y."/>
        </authorList>
    </citation>
    <scope>NUCLEOTIDE SEQUENCE [GENOMIC RNA]</scope>
</reference>
<dbReference type="EMBL" id="M18456">
    <property type="protein sequence ID" value="AAA46639.1"/>
    <property type="molecule type" value="Genomic_RNA"/>
</dbReference>
<dbReference type="EMBL" id="M24701">
    <property type="protein sequence ID" value="AAA46651.1"/>
    <property type="molecule type" value="Genomic_RNA"/>
</dbReference>
<dbReference type="PIR" id="A26185">
    <property type="entry name" value="VGNZND"/>
</dbReference>
<dbReference type="SMR" id="P10865"/>
<dbReference type="GlyCosmos" id="P10865">
    <property type="glycosylation" value="6 sites, No reported glycans"/>
</dbReference>
<dbReference type="GO" id="GO:0020002">
    <property type="term" value="C:host cell plasma membrane"/>
    <property type="evidence" value="ECO:0007669"/>
    <property type="project" value="UniProtKB-SubCell"/>
</dbReference>
<dbReference type="GO" id="GO:0016020">
    <property type="term" value="C:membrane"/>
    <property type="evidence" value="ECO:0007669"/>
    <property type="project" value="UniProtKB-KW"/>
</dbReference>
<dbReference type="GO" id="GO:0019031">
    <property type="term" value="C:viral envelope"/>
    <property type="evidence" value="ECO:0007669"/>
    <property type="project" value="UniProtKB-KW"/>
</dbReference>
<dbReference type="GO" id="GO:0055036">
    <property type="term" value="C:virion membrane"/>
    <property type="evidence" value="ECO:0007669"/>
    <property type="project" value="UniProtKB-SubCell"/>
</dbReference>
<dbReference type="GO" id="GO:0019064">
    <property type="term" value="P:fusion of virus membrane with host plasma membrane"/>
    <property type="evidence" value="ECO:0007669"/>
    <property type="project" value="UniProtKB-KW"/>
</dbReference>
<dbReference type="GO" id="GO:0046718">
    <property type="term" value="P:symbiont entry into host cell"/>
    <property type="evidence" value="ECO:0007669"/>
    <property type="project" value="UniProtKB-KW"/>
</dbReference>
<dbReference type="Gene3D" id="1.10.287.2480">
    <property type="match status" value="2"/>
</dbReference>
<dbReference type="Gene3D" id="2.60.40.1690">
    <property type="entry name" value="Head and neck region of the ectodomain of NDV fusion glycoprotein"/>
    <property type="match status" value="1"/>
</dbReference>
<dbReference type="Gene3D" id="2.40.490.10">
    <property type="entry name" value="Newcastle disease virus like domain"/>
    <property type="match status" value="2"/>
</dbReference>
<dbReference type="InterPro" id="IPR000776">
    <property type="entry name" value="Fusion_F0_Paramyxovir"/>
</dbReference>
<dbReference type="Pfam" id="PF00523">
    <property type="entry name" value="Fusion_gly"/>
    <property type="match status" value="1"/>
</dbReference>
<dbReference type="SUPFAM" id="SSF69922">
    <property type="entry name" value="Head and neck region of the ectodomain of NDV fusion glycoprotein"/>
    <property type="match status" value="1"/>
</dbReference>
<dbReference type="SUPFAM" id="SSF58069">
    <property type="entry name" value="Virus ectodomain"/>
    <property type="match status" value="1"/>
</dbReference>
<sequence length="553" mass="59059">MASRSSTRIPAPLMLTIWIALALGCVRLTSSLDGRPLAAAGIVVTGDKAVNIYTSSQTGSIIIKLLPNMPKDKEACAKAPLEAYNRTLTTLLTPLGDSIRRIQESVTTSGGRRQRRFIGAIIGSVALGVATAAQITAASALIQANQNAANILRLKESIAATNEAVHEVTDGLSQLAVAVGKMQQFVNDQFNNTTQELDCIKITHEVGVELNLYLTELTTVFGPQITSPALNQLTIQALYNLAGGNMDYLLTKLGLGNNQLSSLIGSGLITGNPILYDSQTQLLGIQVTLPSVGNLNNMRATYLETSSVSTTKGFASALVPKVVTQVGSVIEELDTSYCIETDLDLYCTRIVTFPMSPGIYSCLTGNTSACMYSKTEGALTTPYMTLKGSVIANCKMTTCRCADPPGIISQNYGEAVSLIDRHSCNVLSLDGITLRLSGEFDAAYQKNVSILNSQVIVTGNLDISTELGNANNSISNALNKLEESNSKLDKVNVRLTNTSALITYIVLTVISLVCGILSLVLACYLMHKQKAQQKTLLWLGNNTLDQMRATTKA</sequence>
<organismHost>
    <name type="scientific">Gallus gallus</name>
    <name type="common">Chicken</name>
    <dbReference type="NCBI Taxonomy" id="9031"/>
</organismHost>
<comment type="function">
    <text evidence="1">Class I viral fusion protein. Under the current model, the protein has at least 3 conformational states: pre-fusion native state, pre-hairpin intermediate state, and post-fusion hairpin state. During viral and plasma cell membrane fusion, the heptad repeat (HR) regions assume a trimer-of-hairpins structure, positioning the fusion peptide in close proximity to the C-terminal region of the ectodomain. The formation of this structure appears to drive apposition and subsequent fusion of viral and plasma cell membranes. Directs fusion of viral and cellular membranes leading to delivery of the nucleocapsid into the cytoplasm. This fusion is pH independent and occurs directly at the outer cell membrane. The trimer of F1-F2 (F protein) probably interacts with HN at the virion surface. Upon HN binding to its cellular receptor, the hydrophobic fusion peptide is unmasked and interacts with the cellular membrane, inducing the fusion between cell and virion membranes. Later in infection, F proteins expressed at the plasma membrane of infected cells could mediate fusion with adjacent cells to form syncytia, a cytopathic effect that could lead to tissue necrosis (By similarity).</text>
</comment>
<comment type="subunit">
    <text evidence="1">Homotrimer of disulfide-linked F1-F2.</text>
</comment>
<comment type="subcellular location">
    <subcellularLocation>
        <location evidence="1">Virion membrane</location>
        <topology evidence="1">Single-pass type I membrane protein</topology>
    </subcellularLocation>
    <subcellularLocation>
        <location evidence="1">Host cell membrane</location>
        <topology evidence="1">Single-pass membrane protein</topology>
    </subcellularLocation>
</comment>
<comment type="PTM">
    <text evidence="1">The inactive precursor F0 is glycosylated and proteolytically cleaved into F1 and F2 to be functionally active. The cleavage is mediated by cellular proteases during the transport and maturation of the polypeptide (By similarity).</text>
</comment>
<comment type="similarity">
    <text evidence="3">Belongs to the paramyxoviruses fusion glycoprotein family.</text>
</comment>
<name>FUS_NDVM</name>
<protein>
    <recommendedName>
        <fullName>Fusion glycoprotein F0</fullName>
    </recommendedName>
    <component>
        <recommendedName>
            <fullName>Fusion glycoprotein F2</fullName>
        </recommendedName>
    </component>
    <component>
        <recommendedName>
            <fullName>Fusion glycoprotein F1</fullName>
        </recommendedName>
    </component>
</protein>
<gene>
    <name type="primary">F</name>
</gene>
<proteinExistence type="inferred from homology"/>
<organism>
    <name type="scientific">Newcastle disease virus (strain Miyadera/51)</name>
    <name type="common">NDV</name>
    <dbReference type="NCBI Taxonomy" id="11185"/>
    <lineage>
        <taxon>Viruses</taxon>
        <taxon>Riboviria</taxon>
        <taxon>Orthornavirae</taxon>
        <taxon>Negarnaviricota</taxon>
        <taxon>Haploviricotina</taxon>
        <taxon>Monjiviricetes</taxon>
        <taxon>Mononegavirales</taxon>
        <taxon>Paramyxoviridae</taxon>
        <taxon>Avulavirinae</taxon>
        <taxon>Orthoavulavirus</taxon>
        <taxon>Orthoavulavirus javaense</taxon>
        <taxon>Avian paramyxovirus 1</taxon>
    </lineage>
</organism>
<keyword id="KW-0165">Cleavage on pair of basic residues</keyword>
<keyword id="KW-0175">Coiled coil</keyword>
<keyword id="KW-1015">Disulfide bond</keyword>
<keyword id="KW-1169">Fusion of virus membrane with host cell membrane</keyword>
<keyword id="KW-1168">Fusion of virus membrane with host membrane</keyword>
<keyword id="KW-0325">Glycoprotein</keyword>
<keyword id="KW-1032">Host cell membrane</keyword>
<keyword id="KW-1043">Host membrane</keyword>
<keyword id="KW-0449">Lipoprotein</keyword>
<keyword id="KW-0472">Membrane</keyword>
<keyword id="KW-0564">Palmitate</keyword>
<keyword id="KW-0732">Signal</keyword>
<keyword id="KW-0812">Transmembrane</keyword>
<keyword id="KW-1133">Transmembrane helix</keyword>
<keyword id="KW-0261">Viral envelope protein</keyword>
<keyword id="KW-1162">Viral penetration into host cytoplasm</keyword>
<keyword id="KW-0946">Virion</keyword>
<keyword id="KW-1160">Virus entry into host cell</keyword>
<feature type="signal peptide" evidence="2">
    <location>
        <begin position="1"/>
        <end position="31"/>
    </location>
</feature>
<feature type="chain" id="PRO_0000039312" description="Fusion glycoprotein F0">
    <location>
        <begin position="32"/>
        <end position="553"/>
    </location>
</feature>
<feature type="chain" id="PRO_0000039313" description="Fusion glycoprotein F2">
    <location>
        <begin position="32"/>
        <end position="116"/>
    </location>
</feature>
<feature type="chain" id="PRO_0000039314" description="Fusion glycoprotein F1">
    <location>
        <begin position="117"/>
        <end position="553"/>
    </location>
</feature>
<feature type="topological domain" description="Extracellular" evidence="1">
    <location>
        <begin position="32"/>
        <end position="500"/>
    </location>
</feature>
<feature type="transmembrane region" description="Helical" evidence="1">
    <location>
        <begin position="501"/>
        <end position="521"/>
    </location>
</feature>
<feature type="topological domain" description="Cytoplasmic" evidence="1">
    <location>
        <begin position="522"/>
        <end position="553"/>
    </location>
</feature>
<feature type="region of interest" description="Fusion peptide" evidence="1">
    <location>
        <begin position="117"/>
        <end position="141"/>
    </location>
</feature>
<feature type="coiled-coil region" evidence="2">
    <location>
        <begin position="142"/>
        <end position="170"/>
    </location>
</feature>
<feature type="coiled-coil region" evidence="2">
    <location>
        <begin position="466"/>
        <end position="491"/>
    </location>
</feature>
<feature type="site" description="Cleavage; by host" evidence="1">
    <location>
        <begin position="116"/>
        <end position="117"/>
    </location>
</feature>
<feature type="lipid moiety-binding region" description="S-palmitoyl cysteine; by host" evidence="2">
    <location>
        <position position="523"/>
    </location>
</feature>
<feature type="glycosylation site" description="N-linked (GlcNAc...) asparagine; by host" evidence="2">
    <location>
        <position position="85"/>
    </location>
</feature>
<feature type="glycosylation site" description="N-linked (GlcNAc...) asparagine; by host" evidence="2">
    <location>
        <position position="191"/>
    </location>
</feature>
<feature type="glycosylation site" description="N-linked (GlcNAc...) asparagine; by host" evidence="2">
    <location>
        <position position="192"/>
    </location>
</feature>
<feature type="glycosylation site" description="N-linked (GlcNAc...) asparagine; by host" evidence="2">
    <location>
        <position position="366"/>
    </location>
</feature>
<feature type="glycosylation site" description="N-linked (GlcNAc...) asparagine; by host" evidence="2">
    <location>
        <position position="447"/>
    </location>
</feature>
<feature type="glycosylation site" description="N-linked (GlcNAc...) asparagine; by host" evidence="2">
    <location>
        <position position="471"/>
    </location>
</feature>
<feature type="disulfide bond" description="Interchain (between F2 and F1 chains)" evidence="1">
    <location>
        <begin position="76"/>
        <end position="199"/>
    </location>
</feature>
<feature type="disulfide bond" evidence="1">
    <location>
        <begin position="338"/>
        <end position="347"/>
    </location>
</feature>
<feature type="disulfide bond" evidence="1">
    <location>
        <begin position="362"/>
        <end position="370"/>
    </location>
</feature>
<feature type="disulfide bond" evidence="1">
    <location>
        <begin position="394"/>
        <end position="399"/>
    </location>
</feature>
<feature type="disulfide bond" evidence="1">
    <location>
        <begin position="401"/>
        <end position="424"/>
    </location>
</feature>